<sequence>MSACQTPLIVALDFPTRDAALKLADQLDPALCRVKVGKELFTSSASGIVESLCAKGFEVFLDLKFHDIPNTTAMAVKAAAEMGVWMVNVHCSGGLRMMSACREVLAKRSGPQPLLIGVTVLTSMEREDLAGIGLDIEPQEQVLRLAALAEKAGMDGLVCSALEAPALKAAHPSLQLVTPGIRPAGSAQDDQRRILTPRQALDAGSDYLVIGRPISQAADPAQALAAVVAEIRS</sequence>
<dbReference type="EC" id="4.1.1.23" evidence="1"/>
<dbReference type="EMBL" id="CP000949">
    <property type="protein sequence ID" value="ACA71922.1"/>
    <property type="molecule type" value="Genomic_DNA"/>
</dbReference>
<dbReference type="SMR" id="B1J5Q0"/>
<dbReference type="STRING" id="390235.PputW619_1417"/>
<dbReference type="KEGG" id="ppw:PputW619_1417"/>
<dbReference type="eggNOG" id="COG0284">
    <property type="taxonomic scope" value="Bacteria"/>
</dbReference>
<dbReference type="HOGENOM" id="CLU_067069_0_0_6"/>
<dbReference type="OrthoDB" id="9806203at2"/>
<dbReference type="UniPathway" id="UPA00070">
    <property type="reaction ID" value="UER00120"/>
</dbReference>
<dbReference type="GO" id="GO:0005829">
    <property type="term" value="C:cytosol"/>
    <property type="evidence" value="ECO:0007669"/>
    <property type="project" value="TreeGrafter"/>
</dbReference>
<dbReference type="GO" id="GO:0004590">
    <property type="term" value="F:orotidine-5'-phosphate decarboxylase activity"/>
    <property type="evidence" value="ECO:0007669"/>
    <property type="project" value="UniProtKB-UniRule"/>
</dbReference>
<dbReference type="GO" id="GO:0006207">
    <property type="term" value="P:'de novo' pyrimidine nucleobase biosynthetic process"/>
    <property type="evidence" value="ECO:0007669"/>
    <property type="project" value="InterPro"/>
</dbReference>
<dbReference type="GO" id="GO:0044205">
    <property type="term" value="P:'de novo' UMP biosynthetic process"/>
    <property type="evidence" value="ECO:0007669"/>
    <property type="project" value="UniProtKB-UniRule"/>
</dbReference>
<dbReference type="CDD" id="cd04725">
    <property type="entry name" value="OMP_decarboxylase_like"/>
    <property type="match status" value="1"/>
</dbReference>
<dbReference type="FunFam" id="3.20.20.70:FF:000015">
    <property type="entry name" value="Orotidine 5'-phosphate decarboxylase"/>
    <property type="match status" value="1"/>
</dbReference>
<dbReference type="Gene3D" id="3.20.20.70">
    <property type="entry name" value="Aldolase class I"/>
    <property type="match status" value="1"/>
</dbReference>
<dbReference type="HAMAP" id="MF_01200_B">
    <property type="entry name" value="OMPdecase_type1_B"/>
    <property type="match status" value="1"/>
</dbReference>
<dbReference type="InterPro" id="IPR013785">
    <property type="entry name" value="Aldolase_TIM"/>
</dbReference>
<dbReference type="InterPro" id="IPR014732">
    <property type="entry name" value="OMPdecase"/>
</dbReference>
<dbReference type="InterPro" id="IPR018089">
    <property type="entry name" value="OMPdecase_AS"/>
</dbReference>
<dbReference type="InterPro" id="IPR047596">
    <property type="entry name" value="OMPdecase_bac"/>
</dbReference>
<dbReference type="InterPro" id="IPR001754">
    <property type="entry name" value="OMPdeCOase_dom"/>
</dbReference>
<dbReference type="InterPro" id="IPR011060">
    <property type="entry name" value="RibuloseP-bd_barrel"/>
</dbReference>
<dbReference type="NCBIfam" id="NF001273">
    <property type="entry name" value="PRK00230.1"/>
    <property type="match status" value="1"/>
</dbReference>
<dbReference type="NCBIfam" id="TIGR01740">
    <property type="entry name" value="pyrF"/>
    <property type="match status" value="1"/>
</dbReference>
<dbReference type="PANTHER" id="PTHR32119">
    <property type="entry name" value="OROTIDINE 5'-PHOSPHATE DECARBOXYLASE"/>
    <property type="match status" value="1"/>
</dbReference>
<dbReference type="PANTHER" id="PTHR32119:SF2">
    <property type="entry name" value="OROTIDINE 5'-PHOSPHATE DECARBOXYLASE"/>
    <property type="match status" value="1"/>
</dbReference>
<dbReference type="Pfam" id="PF00215">
    <property type="entry name" value="OMPdecase"/>
    <property type="match status" value="1"/>
</dbReference>
<dbReference type="SMART" id="SM00934">
    <property type="entry name" value="OMPdecase"/>
    <property type="match status" value="1"/>
</dbReference>
<dbReference type="SUPFAM" id="SSF51366">
    <property type="entry name" value="Ribulose-phoshate binding barrel"/>
    <property type="match status" value="1"/>
</dbReference>
<dbReference type="PROSITE" id="PS00156">
    <property type="entry name" value="OMPDECASE"/>
    <property type="match status" value="1"/>
</dbReference>
<evidence type="ECO:0000255" key="1">
    <source>
        <dbReference type="HAMAP-Rule" id="MF_01200"/>
    </source>
</evidence>
<organism>
    <name type="scientific">Pseudomonas putida (strain W619)</name>
    <dbReference type="NCBI Taxonomy" id="390235"/>
    <lineage>
        <taxon>Bacteria</taxon>
        <taxon>Pseudomonadati</taxon>
        <taxon>Pseudomonadota</taxon>
        <taxon>Gammaproteobacteria</taxon>
        <taxon>Pseudomonadales</taxon>
        <taxon>Pseudomonadaceae</taxon>
        <taxon>Pseudomonas</taxon>
    </lineage>
</organism>
<name>PYRF_PSEPW</name>
<feature type="chain" id="PRO_1000138549" description="Orotidine 5'-phosphate decarboxylase">
    <location>
        <begin position="1"/>
        <end position="233"/>
    </location>
</feature>
<feature type="active site" description="Proton donor" evidence="1">
    <location>
        <position position="64"/>
    </location>
</feature>
<feature type="binding site" evidence="1">
    <location>
        <position position="13"/>
    </location>
    <ligand>
        <name>substrate</name>
    </ligand>
</feature>
<feature type="binding site" evidence="1">
    <location>
        <position position="35"/>
    </location>
    <ligand>
        <name>substrate</name>
    </ligand>
</feature>
<feature type="binding site" evidence="1">
    <location>
        <begin position="62"/>
        <end position="71"/>
    </location>
    <ligand>
        <name>substrate</name>
    </ligand>
</feature>
<feature type="binding site" evidence="1">
    <location>
        <position position="122"/>
    </location>
    <ligand>
        <name>substrate</name>
    </ligand>
</feature>
<feature type="binding site" evidence="1">
    <location>
        <position position="182"/>
    </location>
    <ligand>
        <name>substrate</name>
    </ligand>
</feature>
<feature type="binding site" evidence="1">
    <location>
        <position position="191"/>
    </location>
    <ligand>
        <name>substrate</name>
    </ligand>
</feature>
<feature type="binding site" evidence="1">
    <location>
        <position position="211"/>
    </location>
    <ligand>
        <name>substrate</name>
    </ligand>
</feature>
<feature type="binding site" evidence="1">
    <location>
        <position position="212"/>
    </location>
    <ligand>
        <name>substrate</name>
    </ligand>
</feature>
<proteinExistence type="inferred from homology"/>
<protein>
    <recommendedName>
        <fullName evidence="1">Orotidine 5'-phosphate decarboxylase</fullName>
        <ecNumber evidence="1">4.1.1.23</ecNumber>
    </recommendedName>
    <alternativeName>
        <fullName evidence="1">OMP decarboxylase</fullName>
        <shortName evidence="1">OMPDCase</shortName>
        <shortName evidence="1">OMPdecase</shortName>
    </alternativeName>
</protein>
<comment type="function">
    <text evidence="1">Catalyzes the decarboxylation of orotidine 5'-monophosphate (OMP) to uridine 5'-monophosphate (UMP).</text>
</comment>
<comment type="catalytic activity">
    <reaction evidence="1">
        <text>orotidine 5'-phosphate + H(+) = UMP + CO2</text>
        <dbReference type="Rhea" id="RHEA:11596"/>
        <dbReference type="ChEBI" id="CHEBI:15378"/>
        <dbReference type="ChEBI" id="CHEBI:16526"/>
        <dbReference type="ChEBI" id="CHEBI:57538"/>
        <dbReference type="ChEBI" id="CHEBI:57865"/>
        <dbReference type="EC" id="4.1.1.23"/>
    </reaction>
</comment>
<comment type="pathway">
    <text evidence="1">Pyrimidine metabolism; UMP biosynthesis via de novo pathway; UMP from orotate: step 2/2.</text>
</comment>
<comment type="subunit">
    <text evidence="1">Homodimer.</text>
</comment>
<comment type="similarity">
    <text evidence="1">Belongs to the OMP decarboxylase family. Type 1 subfamily.</text>
</comment>
<reference key="1">
    <citation type="submission" date="2008-02" db="EMBL/GenBank/DDBJ databases">
        <title>Complete sequence of Pseudomonas putida W619.</title>
        <authorList>
            <person name="Copeland A."/>
            <person name="Lucas S."/>
            <person name="Lapidus A."/>
            <person name="Barry K."/>
            <person name="Detter J.C."/>
            <person name="Glavina del Rio T."/>
            <person name="Dalin E."/>
            <person name="Tice H."/>
            <person name="Pitluck S."/>
            <person name="Chain P."/>
            <person name="Malfatti S."/>
            <person name="Shin M."/>
            <person name="Vergez L."/>
            <person name="Schmutz J."/>
            <person name="Larimer F."/>
            <person name="Land M."/>
            <person name="Hauser L."/>
            <person name="Kyrpides N."/>
            <person name="Kim E."/>
            <person name="Taghavi S."/>
            <person name="Vangronsveld D."/>
            <person name="van der Lelie D."/>
            <person name="Richardson P."/>
        </authorList>
    </citation>
    <scope>NUCLEOTIDE SEQUENCE [LARGE SCALE GENOMIC DNA]</scope>
    <source>
        <strain>W619</strain>
    </source>
</reference>
<gene>
    <name evidence="1" type="primary">pyrF</name>
    <name type="ordered locus">PputW619_1417</name>
</gene>
<keyword id="KW-0210">Decarboxylase</keyword>
<keyword id="KW-0456">Lyase</keyword>
<keyword id="KW-0665">Pyrimidine biosynthesis</keyword>
<accession>B1J5Q0</accession>